<name>NUOK_SALG2</name>
<gene>
    <name evidence="1" type="primary">nuoK</name>
    <name type="ordered locus">SG2348</name>
</gene>
<reference key="1">
    <citation type="journal article" date="2008" name="Genome Res.">
        <title>Comparative genome analysis of Salmonella enteritidis PT4 and Salmonella gallinarum 287/91 provides insights into evolutionary and host adaptation pathways.</title>
        <authorList>
            <person name="Thomson N.R."/>
            <person name="Clayton D.J."/>
            <person name="Windhorst D."/>
            <person name="Vernikos G."/>
            <person name="Davidson S."/>
            <person name="Churcher C."/>
            <person name="Quail M.A."/>
            <person name="Stevens M."/>
            <person name="Jones M.A."/>
            <person name="Watson M."/>
            <person name="Barron A."/>
            <person name="Layton A."/>
            <person name="Pickard D."/>
            <person name="Kingsley R.A."/>
            <person name="Bignell A."/>
            <person name="Clark L."/>
            <person name="Harris B."/>
            <person name="Ormond D."/>
            <person name="Abdellah Z."/>
            <person name="Brooks K."/>
            <person name="Cherevach I."/>
            <person name="Chillingworth T."/>
            <person name="Woodward J."/>
            <person name="Norberczak H."/>
            <person name="Lord A."/>
            <person name="Arrowsmith C."/>
            <person name="Jagels K."/>
            <person name="Moule S."/>
            <person name="Mungall K."/>
            <person name="Saunders M."/>
            <person name="Whitehead S."/>
            <person name="Chabalgoity J.A."/>
            <person name="Maskell D."/>
            <person name="Humphreys T."/>
            <person name="Roberts M."/>
            <person name="Barrow P.A."/>
            <person name="Dougan G."/>
            <person name="Parkhill J."/>
        </authorList>
    </citation>
    <scope>NUCLEOTIDE SEQUENCE [LARGE SCALE GENOMIC DNA]</scope>
    <source>
        <strain>287/91 / NCTC 13346</strain>
    </source>
</reference>
<keyword id="KW-0997">Cell inner membrane</keyword>
<keyword id="KW-1003">Cell membrane</keyword>
<keyword id="KW-0472">Membrane</keyword>
<keyword id="KW-0520">NAD</keyword>
<keyword id="KW-0874">Quinone</keyword>
<keyword id="KW-1278">Translocase</keyword>
<keyword id="KW-0812">Transmembrane</keyword>
<keyword id="KW-1133">Transmembrane helix</keyword>
<keyword id="KW-0813">Transport</keyword>
<keyword id="KW-0830">Ubiquinone</keyword>
<comment type="function">
    <text evidence="1">NDH-1 shuttles electrons from NADH, via FMN and iron-sulfur (Fe-S) centers, to quinones in the respiratory chain. The immediate electron acceptor for the enzyme in this species is believed to be ubiquinone. Couples the redox reaction to proton translocation (for every two electrons transferred, four hydrogen ions are translocated across the cytoplasmic membrane), and thus conserves the redox energy in a proton gradient.</text>
</comment>
<comment type="catalytic activity">
    <reaction evidence="1">
        <text>a quinone + NADH + 5 H(+)(in) = a quinol + NAD(+) + 4 H(+)(out)</text>
        <dbReference type="Rhea" id="RHEA:57888"/>
        <dbReference type="ChEBI" id="CHEBI:15378"/>
        <dbReference type="ChEBI" id="CHEBI:24646"/>
        <dbReference type="ChEBI" id="CHEBI:57540"/>
        <dbReference type="ChEBI" id="CHEBI:57945"/>
        <dbReference type="ChEBI" id="CHEBI:132124"/>
    </reaction>
</comment>
<comment type="subunit">
    <text evidence="1">NDH-1 is composed of 13 different subunits. Subunits NuoA, H, J, K, L, M, N constitute the membrane sector of the complex.</text>
</comment>
<comment type="subcellular location">
    <subcellularLocation>
        <location evidence="1">Cell inner membrane</location>
        <topology evidence="1">Multi-pass membrane protein</topology>
    </subcellularLocation>
</comment>
<comment type="similarity">
    <text evidence="1">Belongs to the complex I subunit 4L family.</text>
</comment>
<evidence type="ECO:0000255" key="1">
    <source>
        <dbReference type="HAMAP-Rule" id="MF_01456"/>
    </source>
</evidence>
<feature type="chain" id="PRO_0000390223" description="NADH-quinone oxidoreductase subunit K">
    <location>
        <begin position="1"/>
        <end position="100"/>
    </location>
</feature>
<feature type="transmembrane region" description="Helical" evidence="1">
    <location>
        <begin position="4"/>
        <end position="24"/>
    </location>
</feature>
<feature type="transmembrane region" description="Helical" evidence="1">
    <location>
        <begin position="28"/>
        <end position="48"/>
    </location>
</feature>
<feature type="transmembrane region" description="Helical" evidence="1">
    <location>
        <begin position="60"/>
        <end position="80"/>
    </location>
</feature>
<dbReference type="EC" id="7.1.1.-" evidence="1"/>
<dbReference type="EMBL" id="AM933173">
    <property type="protein sequence ID" value="CAR38178.1"/>
    <property type="molecule type" value="Genomic_DNA"/>
</dbReference>
<dbReference type="RefSeq" id="WP_000612687.1">
    <property type="nucleotide sequence ID" value="NC_011274.1"/>
</dbReference>
<dbReference type="SMR" id="B5RCE4"/>
<dbReference type="KEGG" id="seg:SG2348"/>
<dbReference type="HOGENOM" id="CLU_144724_0_1_6"/>
<dbReference type="Proteomes" id="UP000008321">
    <property type="component" value="Chromosome"/>
</dbReference>
<dbReference type="GO" id="GO:0030964">
    <property type="term" value="C:NADH dehydrogenase complex"/>
    <property type="evidence" value="ECO:0007669"/>
    <property type="project" value="TreeGrafter"/>
</dbReference>
<dbReference type="GO" id="GO:0005886">
    <property type="term" value="C:plasma membrane"/>
    <property type="evidence" value="ECO:0007669"/>
    <property type="project" value="UniProtKB-SubCell"/>
</dbReference>
<dbReference type="GO" id="GO:0050136">
    <property type="term" value="F:NADH:ubiquinone reductase (non-electrogenic) activity"/>
    <property type="evidence" value="ECO:0007669"/>
    <property type="project" value="UniProtKB-UniRule"/>
</dbReference>
<dbReference type="GO" id="GO:0048038">
    <property type="term" value="F:quinone binding"/>
    <property type="evidence" value="ECO:0007669"/>
    <property type="project" value="UniProtKB-KW"/>
</dbReference>
<dbReference type="GO" id="GO:0042773">
    <property type="term" value="P:ATP synthesis coupled electron transport"/>
    <property type="evidence" value="ECO:0007669"/>
    <property type="project" value="InterPro"/>
</dbReference>
<dbReference type="FunFam" id="1.10.287.3510:FF:000001">
    <property type="entry name" value="NADH-quinone oxidoreductase subunit K"/>
    <property type="match status" value="1"/>
</dbReference>
<dbReference type="Gene3D" id="1.10.287.3510">
    <property type="match status" value="1"/>
</dbReference>
<dbReference type="HAMAP" id="MF_01456">
    <property type="entry name" value="NDH1_NuoK"/>
    <property type="match status" value="1"/>
</dbReference>
<dbReference type="InterPro" id="IPR001133">
    <property type="entry name" value="NADH_UbQ_OxRdtase_chain4L/K"/>
</dbReference>
<dbReference type="InterPro" id="IPR039428">
    <property type="entry name" value="NUOK/Mnh_C1-like"/>
</dbReference>
<dbReference type="NCBIfam" id="NF004319">
    <property type="entry name" value="PRK05715.1-1"/>
    <property type="match status" value="1"/>
</dbReference>
<dbReference type="NCBIfam" id="NF004320">
    <property type="entry name" value="PRK05715.1-2"/>
    <property type="match status" value="1"/>
</dbReference>
<dbReference type="PANTHER" id="PTHR11434:SF16">
    <property type="entry name" value="NADH-UBIQUINONE OXIDOREDUCTASE CHAIN 4L"/>
    <property type="match status" value="1"/>
</dbReference>
<dbReference type="PANTHER" id="PTHR11434">
    <property type="entry name" value="NADH-UBIQUINONE OXIDOREDUCTASE SUBUNIT ND4L"/>
    <property type="match status" value="1"/>
</dbReference>
<dbReference type="Pfam" id="PF00420">
    <property type="entry name" value="Oxidored_q2"/>
    <property type="match status" value="1"/>
</dbReference>
<proteinExistence type="inferred from homology"/>
<sequence>MIPLTHGLILAAILFVLGLTGLVIRRNLLFMLIGLEIMINASALAFVVAGSYWGQTDGQVMYILAISLAAAEASIGLALLLQLHRRRQNLNIDSVSEMRG</sequence>
<accession>B5RCE4</accession>
<organism>
    <name type="scientific">Salmonella gallinarum (strain 287/91 / NCTC 13346)</name>
    <dbReference type="NCBI Taxonomy" id="550538"/>
    <lineage>
        <taxon>Bacteria</taxon>
        <taxon>Pseudomonadati</taxon>
        <taxon>Pseudomonadota</taxon>
        <taxon>Gammaproteobacteria</taxon>
        <taxon>Enterobacterales</taxon>
        <taxon>Enterobacteriaceae</taxon>
        <taxon>Salmonella</taxon>
    </lineage>
</organism>
<protein>
    <recommendedName>
        <fullName evidence="1">NADH-quinone oxidoreductase subunit K</fullName>
        <ecNumber evidence="1">7.1.1.-</ecNumber>
    </recommendedName>
    <alternativeName>
        <fullName evidence="1">NADH dehydrogenase I subunit K</fullName>
    </alternativeName>
    <alternativeName>
        <fullName evidence="1">NDH-1 subunit K</fullName>
    </alternativeName>
</protein>